<comment type="function">
    <text evidence="1">Converts O-phospho-L-seryl-tRNA(Cys) (Sep-tRNA(Cys)) to L-cysteinyl-tRNA(Cys) (Cys-tRNA(Cys)).</text>
</comment>
<comment type="catalytic activity">
    <reaction evidence="1">
        <text>O-phospho-L-seryl-tRNA(Cys) + hydrogen sulfide + H(+) = L-cysteinyl-tRNA(Cys) + phosphate</text>
        <dbReference type="Rhea" id="RHEA:25686"/>
        <dbReference type="Rhea" id="RHEA-COMP:9679"/>
        <dbReference type="Rhea" id="RHEA-COMP:9719"/>
        <dbReference type="ChEBI" id="CHEBI:15378"/>
        <dbReference type="ChEBI" id="CHEBI:29919"/>
        <dbReference type="ChEBI" id="CHEBI:43474"/>
        <dbReference type="ChEBI" id="CHEBI:78517"/>
        <dbReference type="ChEBI" id="CHEBI:78551"/>
        <dbReference type="EC" id="2.5.1.73"/>
    </reaction>
</comment>
<comment type="cofactor">
    <cofactor evidence="1">
        <name>pyridoxal 5'-phosphate</name>
        <dbReference type="ChEBI" id="CHEBI:597326"/>
    </cofactor>
</comment>
<comment type="subunit">
    <text evidence="1">Homodimer. Interacts with SepRS.</text>
</comment>
<comment type="similarity">
    <text evidence="1">Belongs to the SepCysS family.</text>
</comment>
<gene>
    <name type="ordered locus">MMP1240</name>
</gene>
<dbReference type="EC" id="2.5.1.73" evidence="1"/>
<dbReference type="EMBL" id="BX950229">
    <property type="protein sequence ID" value="CAF30796.1"/>
    <property type="molecule type" value="Genomic_DNA"/>
</dbReference>
<dbReference type="RefSeq" id="WP_011171184.1">
    <property type="nucleotide sequence ID" value="NC_005791.1"/>
</dbReference>
<dbReference type="SMR" id="Q6LXV6"/>
<dbReference type="STRING" id="267377.MMP1240"/>
<dbReference type="EnsemblBacteria" id="CAF30796">
    <property type="protein sequence ID" value="CAF30796"/>
    <property type="gene ID" value="MMP1240"/>
</dbReference>
<dbReference type="GeneID" id="2761889"/>
<dbReference type="KEGG" id="mmp:MMP1240"/>
<dbReference type="PATRIC" id="fig|267377.15.peg.1273"/>
<dbReference type="eggNOG" id="arCOG00091">
    <property type="taxonomic scope" value="Archaea"/>
</dbReference>
<dbReference type="HOGENOM" id="CLU_060476_0_0_2"/>
<dbReference type="OrthoDB" id="5817at2157"/>
<dbReference type="Proteomes" id="UP000000590">
    <property type="component" value="Chromosome"/>
</dbReference>
<dbReference type="GO" id="GO:0043766">
    <property type="term" value="F:Sep-tRNA:Cys-tRNA synthase activity"/>
    <property type="evidence" value="ECO:0007669"/>
    <property type="project" value="UniProtKB-UniRule"/>
</dbReference>
<dbReference type="GO" id="GO:0006412">
    <property type="term" value="P:translation"/>
    <property type="evidence" value="ECO:0007669"/>
    <property type="project" value="UniProtKB-KW"/>
</dbReference>
<dbReference type="Gene3D" id="3.90.1150.10">
    <property type="entry name" value="Aspartate Aminotransferase, domain 1"/>
    <property type="match status" value="1"/>
</dbReference>
<dbReference type="Gene3D" id="3.40.640.10">
    <property type="entry name" value="Type I PLP-dependent aspartate aminotransferase-like (Major domain)"/>
    <property type="match status" value="1"/>
</dbReference>
<dbReference type="HAMAP" id="MF_01675">
    <property type="entry name" value="Sep_Cys_tRNA_synth"/>
    <property type="match status" value="1"/>
</dbReference>
<dbReference type="InterPro" id="IPR015424">
    <property type="entry name" value="PyrdxlP-dep_Trfase"/>
</dbReference>
<dbReference type="InterPro" id="IPR015421">
    <property type="entry name" value="PyrdxlP-dep_Trfase_major"/>
</dbReference>
<dbReference type="InterPro" id="IPR015422">
    <property type="entry name" value="PyrdxlP-dep_Trfase_small"/>
</dbReference>
<dbReference type="InterPro" id="IPR013375">
    <property type="entry name" value="Sep_Cys-tRNA_synth_arc"/>
</dbReference>
<dbReference type="InterPro" id="IPR008829">
    <property type="entry name" value="SepSecS/SepCysS"/>
</dbReference>
<dbReference type="NCBIfam" id="NF006810">
    <property type="entry name" value="PRK09331.1"/>
    <property type="match status" value="1"/>
</dbReference>
<dbReference type="NCBIfam" id="TIGR02539">
    <property type="entry name" value="SepCysS"/>
    <property type="match status" value="1"/>
</dbReference>
<dbReference type="PANTHER" id="PTHR43586">
    <property type="entry name" value="CYSTEINE DESULFURASE"/>
    <property type="match status" value="1"/>
</dbReference>
<dbReference type="PANTHER" id="PTHR43586:SF3">
    <property type="entry name" value="O-PHOSPHO-L-SERYL-TRNA:CYS-TRNA SYNTHASE"/>
    <property type="match status" value="1"/>
</dbReference>
<dbReference type="Pfam" id="PF05889">
    <property type="entry name" value="SepSecS"/>
    <property type="match status" value="1"/>
</dbReference>
<dbReference type="SUPFAM" id="SSF53383">
    <property type="entry name" value="PLP-dependent transferases"/>
    <property type="match status" value="1"/>
</dbReference>
<name>SPSS_METMP</name>
<reference key="1">
    <citation type="journal article" date="2004" name="J. Bacteriol.">
        <title>Complete genome sequence of the genetically tractable hydrogenotrophic methanogen Methanococcus maripaludis.</title>
        <authorList>
            <person name="Hendrickson E.L."/>
            <person name="Kaul R."/>
            <person name="Zhou Y."/>
            <person name="Bovee D."/>
            <person name="Chapman P."/>
            <person name="Chung J."/>
            <person name="Conway de Macario E."/>
            <person name="Dodsworth J.A."/>
            <person name="Gillett W."/>
            <person name="Graham D.E."/>
            <person name="Hackett M."/>
            <person name="Haydock A.K."/>
            <person name="Kang A."/>
            <person name="Land M.L."/>
            <person name="Levy R."/>
            <person name="Lie T.J."/>
            <person name="Major T.A."/>
            <person name="Moore B.C."/>
            <person name="Porat I."/>
            <person name="Palmeiri A."/>
            <person name="Rouse G."/>
            <person name="Saenphimmachak C."/>
            <person name="Soell D."/>
            <person name="Van Dien S."/>
            <person name="Wang T."/>
            <person name="Whitman W.B."/>
            <person name="Xia Q."/>
            <person name="Zhang Y."/>
            <person name="Larimer F.W."/>
            <person name="Olson M.V."/>
            <person name="Leigh J.A."/>
        </authorList>
    </citation>
    <scope>NUCLEOTIDE SEQUENCE [LARGE SCALE GENOMIC DNA]</scope>
    <source>
        <strain>DSM 14266 / JCM 13030 / NBRC 101832 / S2 / LL</strain>
    </source>
</reference>
<keyword id="KW-0648">Protein biosynthesis</keyword>
<keyword id="KW-0663">Pyridoxal phosphate</keyword>
<keyword id="KW-1185">Reference proteome</keyword>
<keyword id="KW-0808">Transferase</keyword>
<organism>
    <name type="scientific">Methanococcus maripaludis (strain DSM 14266 / JCM 13030 / NBRC 101832 / S2 / LL)</name>
    <dbReference type="NCBI Taxonomy" id="267377"/>
    <lineage>
        <taxon>Archaea</taxon>
        <taxon>Methanobacteriati</taxon>
        <taxon>Methanobacteriota</taxon>
        <taxon>Methanomada group</taxon>
        <taxon>Methanococci</taxon>
        <taxon>Methanococcales</taxon>
        <taxon>Methanococcaceae</taxon>
        <taxon>Methanococcus</taxon>
    </lineage>
</organism>
<accession>Q6LXV6</accession>
<sequence>MDINTDKYKNITRNLEREMINLNPIQRGGILPTESKKIIYEYWDGYSVCDYCSGRLDQIETPPINEFLEDMSKFLGMDITRPTHGARESKYAVMNSICKEGDYVVLDGNAHYTSYVALERAKLNYEKTDIEEYPTFRVIPESYAEKIDMLEDSKKNIGLILLTHVDGNYGNVADVEKVGKIAKSKGYPFLLNCAYSAGRMPIDGKKLNVDFIAASGHKSMAASGPCGLLSINKKYENEVLETSKVNVLKELQMLGCTSRGIPILSLMASFEHLIERVKKWDLELEKTRKVVNELEPLGFKQIGEKPRNHDIIRFETPILDEIAEKDKRRGFFFYEELKKRGIGGIRRGVTKEFKMSVYGLTNTQVDYVINSMKSIINELR</sequence>
<feature type="chain" id="PRO_0000359448" description="O-phospho-L-seryl-tRNA:Cys-tRNA synthase">
    <location>
        <begin position="1"/>
        <end position="380"/>
    </location>
</feature>
<feature type="binding site" evidence="1">
    <location>
        <begin position="86"/>
        <end position="87"/>
    </location>
    <ligand>
        <name>pyridoxal 5'-phosphate</name>
        <dbReference type="ChEBI" id="CHEBI:597326"/>
    </ligand>
</feature>
<feature type="binding site" evidence="1">
    <location>
        <position position="192"/>
    </location>
    <ligand>
        <name>pyridoxal 5'-phosphate</name>
        <dbReference type="ChEBI" id="CHEBI:597326"/>
    </ligand>
</feature>
<feature type="binding site" evidence="1">
    <location>
        <begin position="215"/>
        <end position="217"/>
    </location>
    <ligand>
        <name>pyridoxal 5'-phosphate</name>
        <dbReference type="ChEBI" id="CHEBI:597326"/>
    </ligand>
</feature>
<feature type="modified residue" description="N6-(pyridoxal phosphate)lysine" evidence="1">
    <location>
        <position position="218"/>
    </location>
</feature>
<protein>
    <recommendedName>
        <fullName evidence="1">O-phospho-L-seryl-tRNA:Cys-tRNA synthase</fullName>
        <ecNumber evidence="1">2.5.1.73</ecNumber>
    </recommendedName>
    <alternativeName>
        <fullName evidence="1">Sep-tRNA:Cys-tRNA synthase</fullName>
        <shortName evidence="1">SepCysS</shortName>
    </alternativeName>
</protein>
<proteinExistence type="inferred from homology"/>
<evidence type="ECO:0000255" key="1">
    <source>
        <dbReference type="HAMAP-Rule" id="MF_01675"/>
    </source>
</evidence>